<proteinExistence type="inferred from homology"/>
<sequence>MNTQQLAKLRSIVPEMRRVRHIHFVGIGGAGMGGIAEVLANEGYQISGSDLAPNPVTQQLMNLGATIYFNHRPENVRDASVVVVSSAISADNPEIVAAHEARIPVIRRAEMLAELMRFRHGIAIAGTHGKTTTTAMVSSIYAEAGLDPTFVNGGLVKAAGVHARLGHGRYLIAEADESDASFLHLQPMVAIVTNIEADHMDTYQGDFENLKQTFINFLHNLPFYGRAVMCVDDPVIRELLPRVGRQTTTYGFSEDADVRVEDYQQIGPQGHFTLLRQDKEPMRVTLNAPGRHNALNAAAAVAVATEEGIDDEAILRALESFQGTGRRFDFLGEFPLEPVNGKSGTAMLVDDYGHHPTEVDATIKAARAGWPDKNLVMLFQPHRFTRTRDLYDDFANVLTQVDTLLMLEVYPAGEAPIPGADSRSLCRTIRGRGKIDPILVPDPAQVAEMLAPVLTGNDLILVQGAGNIGKIARSLAEIKLKPQTPEEEQHD</sequence>
<organism>
    <name type="scientific">Escherichia coli O8 (strain IAI1)</name>
    <dbReference type="NCBI Taxonomy" id="585034"/>
    <lineage>
        <taxon>Bacteria</taxon>
        <taxon>Pseudomonadati</taxon>
        <taxon>Pseudomonadota</taxon>
        <taxon>Gammaproteobacteria</taxon>
        <taxon>Enterobacterales</taxon>
        <taxon>Enterobacteriaceae</taxon>
        <taxon>Escherichia</taxon>
    </lineage>
</organism>
<keyword id="KW-0067">ATP-binding</keyword>
<keyword id="KW-0131">Cell cycle</keyword>
<keyword id="KW-0132">Cell division</keyword>
<keyword id="KW-0133">Cell shape</keyword>
<keyword id="KW-0961">Cell wall biogenesis/degradation</keyword>
<keyword id="KW-0963">Cytoplasm</keyword>
<keyword id="KW-0436">Ligase</keyword>
<keyword id="KW-0547">Nucleotide-binding</keyword>
<keyword id="KW-0573">Peptidoglycan synthesis</keyword>
<evidence type="ECO:0000255" key="1">
    <source>
        <dbReference type="HAMAP-Rule" id="MF_00046"/>
    </source>
</evidence>
<reference key="1">
    <citation type="journal article" date="2009" name="PLoS Genet.">
        <title>Organised genome dynamics in the Escherichia coli species results in highly diverse adaptive paths.</title>
        <authorList>
            <person name="Touchon M."/>
            <person name="Hoede C."/>
            <person name="Tenaillon O."/>
            <person name="Barbe V."/>
            <person name="Baeriswyl S."/>
            <person name="Bidet P."/>
            <person name="Bingen E."/>
            <person name="Bonacorsi S."/>
            <person name="Bouchier C."/>
            <person name="Bouvet O."/>
            <person name="Calteau A."/>
            <person name="Chiapello H."/>
            <person name="Clermont O."/>
            <person name="Cruveiller S."/>
            <person name="Danchin A."/>
            <person name="Diard M."/>
            <person name="Dossat C."/>
            <person name="Karoui M.E."/>
            <person name="Frapy E."/>
            <person name="Garry L."/>
            <person name="Ghigo J.M."/>
            <person name="Gilles A.M."/>
            <person name="Johnson J."/>
            <person name="Le Bouguenec C."/>
            <person name="Lescat M."/>
            <person name="Mangenot S."/>
            <person name="Martinez-Jehanne V."/>
            <person name="Matic I."/>
            <person name="Nassif X."/>
            <person name="Oztas S."/>
            <person name="Petit M.A."/>
            <person name="Pichon C."/>
            <person name="Rouy Z."/>
            <person name="Ruf C.S."/>
            <person name="Schneider D."/>
            <person name="Tourret J."/>
            <person name="Vacherie B."/>
            <person name="Vallenet D."/>
            <person name="Medigue C."/>
            <person name="Rocha E.P.C."/>
            <person name="Denamur E."/>
        </authorList>
    </citation>
    <scope>NUCLEOTIDE SEQUENCE [LARGE SCALE GENOMIC DNA]</scope>
    <source>
        <strain>IAI1</strain>
    </source>
</reference>
<name>MURC_ECO8A</name>
<dbReference type="EC" id="6.3.2.8" evidence="1"/>
<dbReference type="EMBL" id="CU928160">
    <property type="protein sequence ID" value="CAQ96980.1"/>
    <property type="molecule type" value="Genomic_DNA"/>
</dbReference>
<dbReference type="RefSeq" id="WP_001096048.1">
    <property type="nucleotide sequence ID" value="NC_011741.1"/>
</dbReference>
<dbReference type="SMR" id="B7M134"/>
<dbReference type="GeneID" id="75169991"/>
<dbReference type="KEGG" id="ecr:ECIAI1_0090"/>
<dbReference type="HOGENOM" id="CLU_028104_2_2_6"/>
<dbReference type="UniPathway" id="UPA00219"/>
<dbReference type="GO" id="GO:0005737">
    <property type="term" value="C:cytoplasm"/>
    <property type="evidence" value="ECO:0007669"/>
    <property type="project" value="UniProtKB-SubCell"/>
</dbReference>
<dbReference type="GO" id="GO:0005524">
    <property type="term" value="F:ATP binding"/>
    <property type="evidence" value="ECO:0007669"/>
    <property type="project" value="UniProtKB-UniRule"/>
</dbReference>
<dbReference type="GO" id="GO:0008763">
    <property type="term" value="F:UDP-N-acetylmuramate-L-alanine ligase activity"/>
    <property type="evidence" value="ECO:0007669"/>
    <property type="project" value="UniProtKB-UniRule"/>
</dbReference>
<dbReference type="GO" id="GO:0051301">
    <property type="term" value="P:cell division"/>
    <property type="evidence" value="ECO:0007669"/>
    <property type="project" value="UniProtKB-KW"/>
</dbReference>
<dbReference type="GO" id="GO:0071555">
    <property type="term" value="P:cell wall organization"/>
    <property type="evidence" value="ECO:0007669"/>
    <property type="project" value="UniProtKB-KW"/>
</dbReference>
<dbReference type="GO" id="GO:0009252">
    <property type="term" value="P:peptidoglycan biosynthetic process"/>
    <property type="evidence" value="ECO:0007669"/>
    <property type="project" value="UniProtKB-UniRule"/>
</dbReference>
<dbReference type="GO" id="GO:0008360">
    <property type="term" value="P:regulation of cell shape"/>
    <property type="evidence" value="ECO:0007669"/>
    <property type="project" value="UniProtKB-KW"/>
</dbReference>
<dbReference type="FunFam" id="3.40.1190.10:FF:000001">
    <property type="entry name" value="UDP-N-acetylmuramate--L-alanine ligase"/>
    <property type="match status" value="1"/>
</dbReference>
<dbReference type="FunFam" id="3.40.50.720:FF:000046">
    <property type="entry name" value="UDP-N-acetylmuramate--L-alanine ligase"/>
    <property type="match status" value="1"/>
</dbReference>
<dbReference type="FunFam" id="3.90.190.20:FF:000001">
    <property type="entry name" value="UDP-N-acetylmuramate--L-alanine ligase"/>
    <property type="match status" value="1"/>
</dbReference>
<dbReference type="Gene3D" id="3.90.190.20">
    <property type="entry name" value="Mur ligase, C-terminal domain"/>
    <property type="match status" value="1"/>
</dbReference>
<dbReference type="Gene3D" id="3.40.1190.10">
    <property type="entry name" value="Mur-like, catalytic domain"/>
    <property type="match status" value="1"/>
</dbReference>
<dbReference type="Gene3D" id="3.40.50.720">
    <property type="entry name" value="NAD(P)-binding Rossmann-like Domain"/>
    <property type="match status" value="1"/>
</dbReference>
<dbReference type="HAMAP" id="MF_00046">
    <property type="entry name" value="MurC"/>
    <property type="match status" value="1"/>
</dbReference>
<dbReference type="InterPro" id="IPR036565">
    <property type="entry name" value="Mur-like_cat_sf"/>
</dbReference>
<dbReference type="InterPro" id="IPR004101">
    <property type="entry name" value="Mur_ligase_C"/>
</dbReference>
<dbReference type="InterPro" id="IPR036615">
    <property type="entry name" value="Mur_ligase_C_dom_sf"/>
</dbReference>
<dbReference type="InterPro" id="IPR013221">
    <property type="entry name" value="Mur_ligase_cen"/>
</dbReference>
<dbReference type="InterPro" id="IPR000713">
    <property type="entry name" value="Mur_ligase_N"/>
</dbReference>
<dbReference type="InterPro" id="IPR050061">
    <property type="entry name" value="MurCDEF_pg_biosynth"/>
</dbReference>
<dbReference type="InterPro" id="IPR005758">
    <property type="entry name" value="UDP-N-AcMur_Ala_ligase_MurC"/>
</dbReference>
<dbReference type="NCBIfam" id="TIGR01082">
    <property type="entry name" value="murC"/>
    <property type="match status" value="1"/>
</dbReference>
<dbReference type="PANTHER" id="PTHR43445:SF3">
    <property type="entry name" value="UDP-N-ACETYLMURAMATE--L-ALANINE LIGASE"/>
    <property type="match status" value="1"/>
</dbReference>
<dbReference type="PANTHER" id="PTHR43445">
    <property type="entry name" value="UDP-N-ACETYLMURAMATE--L-ALANINE LIGASE-RELATED"/>
    <property type="match status" value="1"/>
</dbReference>
<dbReference type="Pfam" id="PF01225">
    <property type="entry name" value="Mur_ligase"/>
    <property type="match status" value="1"/>
</dbReference>
<dbReference type="Pfam" id="PF02875">
    <property type="entry name" value="Mur_ligase_C"/>
    <property type="match status" value="1"/>
</dbReference>
<dbReference type="Pfam" id="PF08245">
    <property type="entry name" value="Mur_ligase_M"/>
    <property type="match status" value="1"/>
</dbReference>
<dbReference type="SUPFAM" id="SSF51984">
    <property type="entry name" value="MurCD N-terminal domain"/>
    <property type="match status" value="1"/>
</dbReference>
<dbReference type="SUPFAM" id="SSF53623">
    <property type="entry name" value="MurD-like peptide ligases, catalytic domain"/>
    <property type="match status" value="1"/>
</dbReference>
<dbReference type="SUPFAM" id="SSF53244">
    <property type="entry name" value="MurD-like peptide ligases, peptide-binding domain"/>
    <property type="match status" value="1"/>
</dbReference>
<accession>B7M134</accession>
<feature type="chain" id="PRO_1000116623" description="UDP-N-acetylmuramate--L-alanine ligase">
    <location>
        <begin position="1"/>
        <end position="491"/>
    </location>
</feature>
<feature type="binding site" evidence="1">
    <location>
        <begin position="126"/>
        <end position="132"/>
    </location>
    <ligand>
        <name>ATP</name>
        <dbReference type="ChEBI" id="CHEBI:30616"/>
    </ligand>
</feature>
<comment type="function">
    <text evidence="1">Cell wall formation.</text>
</comment>
<comment type="catalytic activity">
    <reaction evidence="1">
        <text>UDP-N-acetyl-alpha-D-muramate + L-alanine + ATP = UDP-N-acetyl-alpha-D-muramoyl-L-alanine + ADP + phosphate + H(+)</text>
        <dbReference type="Rhea" id="RHEA:23372"/>
        <dbReference type="ChEBI" id="CHEBI:15378"/>
        <dbReference type="ChEBI" id="CHEBI:30616"/>
        <dbReference type="ChEBI" id="CHEBI:43474"/>
        <dbReference type="ChEBI" id="CHEBI:57972"/>
        <dbReference type="ChEBI" id="CHEBI:70757"/>
        <dbReference type="ChEBI" id="CHEBI:83898"/>
        <dbReference type="ChEBI" id="CHEBI:456216"/>
        <dbReference type="EC" id="6.3.2.8"/>
    </reaction>
</comment>
<comment type="pathway">
    <text evidence="1">Cell wall biogenesis; peptidoglycan biosynthesis.</text>
</comment>
<comment type="subcellular location">
    <subcellularLocation>
        <location evidence="1">Cytoplasm</location>
    </subcellularLocation>
</comment>
<comment type="similarity">
    <text evidence="1">Belongs to the MurCDEF family.</text>
</comment>
<protein>
    <recommendedName>
        <fullName evidence="1">UDP-N-acetylmuramate--L-alanine ligase</fullName>
        <ecNumber evidence="1">6.3.2.8</ecNumber>
    </recommendedName>
    <alternativeName>
        <fullName evidence="1">UDP-N-acetylmuramoyl-L-alanine synthetase</fullName>
    </alternativeName>
</protein>
<gene>
    <name evidence="1" type="primary">murC</name>
    <name type="ordered locus">ECIAI1_0090</name>
</gene>